<sequence>MICAVYKSRRKADSYLFVEKRNEFERVPEALLEMFGPPELVMMLPLMKRDHLGFADIEKVKSELADKGFYLQLPPPVVNLLEEHKREIGYSRD</sequence>
<dbReference type="EMBL" id="CP000961">
    <property type="protein sequence ID" value="ACA86399.1"/>
    <property type="molecule type" value="Genomic_DNA"/>
</dbReference>
<dbReference type="RefSeq" id="WP_012324744.1">
    <property type="nucleotide sequence ID" value="NC_010506.1"/>
</dbReference>
<dbReference type="SMR" id="B1KDK2"/>
<dbReference type="STRING" id="392500.Swoo_2115"/>
<dbReference type="KEGG" id="swd:Swoo_2115"/>
<dbReference type="eggNOG" id="COG3100">
    <property type="taxonomic scope" value="Bacteria"/>
</dbReference>
<dbReference type="HOGENOM" id="CLU_155118_1_0_6"/>
<dbReference type="Proteomes" id="UP000002168">
    <property type="component" value="Chromosome"/>
</dbReference>
<dbReference type="Gene3D" id="3.10.510.20">
    <property type="entry name" value="YcgL domain"/>
    <property type="match status" value="1"/>
</dbReference>
<dbReference type="HAMAP" id="MF_01866">
    <property type="entry name" value="UPF0745"/>
    <property type="match status" value="1"/>
</dbReference>
<dbReference type="InterPro" id="IPR038068">
    <property type="entry name" value="YcgL-like_sf"/>
</dbReference>
<dbReference type="InterPro" id="IPR027354">
    <property type="entry name" value="YcgL_dom"/>
</dbReference>
<dbReference type="PANTHER" id="PTHR38109">
    <property type="entry name" value="PROTEIN YCGL"/>
    <property type="match status" value="1"/>
</dbReference>
<dbReference type="PANTHER" id="PTHR38109:SF1">
    <property type="entry name" value="PROTEIN YCGL"/>
    <property type="match status" value="1"/>
</dbReference>
<dbReference type="Pfam" id="PF05166">
    <property type="entry name" value="YcgL"/>
    <property type="match status" value="1"/>
</dbReference>
<dbReference type="SUPFAM" id="SSF160191">
    <property type="entry name" value="YcgL-like"/>
    <property type="match status" value="1"/>
</dbReference>
<dbReference type="PROSITE" id="PS51648">
    <property type="entry name" value="YCGL"/>
    <property type="match status" value="1"/>
</dbReference>
<feature type="chain" id="PRO_0000375381" description="YcgL domain-containing protein Swoo_2115">
    <location>
        <begin position="1"/>
        <end position="93"/>
    </location>
</feature>
<feature type="domain" description="YcgL" evidence="1">
    <location>
        <begin position="1"/>
        <end position="85"/>
    </location>
</feature>
<proteinExistence type="inferred from homology"/>
<organism>
    <name type="scientific">Shewanella woodyi (strain ATCC 51908 / MS32)</name>
    <dbReference type="NCBI Taxonomy" id="392500"/>
    <lineage>
        <taxon>Bacteria</taxon>
        <taxon>Pseudomonadati</taxon>
        <taxon>Pseudomonadota</taxon>
        <taxon>Gammaproteobacteria</taxon>
        <taxon>Alteromonadales</taxon>
        <taxon>Shewanellaceae</taxon>
        <taxon>Shewanella</taxon>
    </lineage>
</organism>
<protein>
    <recommendedName>
        <fullName evidence="1">YcgL domain-containing protein Swoo_2115</fullName>
    </recommendedName>
</protein>
<gene>
    <name type="ordered locus">Swoo_2115</name>
</gene>
<reference key="1">
    <citation type="submission" date="2008-02" db="EMBL/GenBank/DDBJ databases">
        <title>Complete sequence of Shewanella woodyi ATCC 51908.</title>
        <authorList>
            <consortium name="US DOE Joint Genome Institute"/>
            <person name="Copeland A."/>
            <person name="Lucas S."/>
            <person name="Lapidus A."/>
            <person name="Glavina del Rio T."/>
            <person name="Dalin E."/>
            <person name="Tice H."/>
            <person name="Bruce D."/>
            <person name="Goodwin L."/>
            <person name="Pitluck S."/>
            <person name="Sims D."/>
            <person name="Brettin T."/>
            <person name="Detter J.C."/>
            <person name="Han C."/>
            <person name="Kuske C.R."/>
            <person name="Schmutz J."/>
            <person name="Larimer F."/>
            <person name="Land M."/>
            <person name="Hauser L."/>
            <person name="Kyrpides N."/>
            <person name="Lykidis A."/>
            <person name="Zhao J.-S."/>
            <person name="Richardson P."/>
        </authorList>
    </citation>
    <scope>NUCLEOTIDE SEQUENCE [LARGE SCALE GENOMIC DNA]</scope>
    <source>
        <strain>ATCC 51908 / MS32</strain>
    </source>
</reference>
<keyword id="KW-1185">Reference proteome</keyword>
<accession>B1KDK2</accession>
<name>Y2115_SHEWM</name>
<evidence type="ECO:0000255" key="1">
    <source>
        <dbReference type="HAMAP-Rule" id="MF_01866"/>
    </source>
</evidence>